<keyword id="KW-0012">Acyltransferase</keyword>
<keyword id="KW-0963">Cytoplasm</keyword>
<keyword id="KW-0408">Iron</keyword>
<keyword id="KW-0479">Metal-binding</keyword>
<keyword id="KW-0808">Transferase</keyword>
<keyword id="KW-0819">tRNA processing</keyword>
<reference key="1">
    <citation type="submission" date="2006-12" db="EMBL/GenBank/DDBJ databases">
        <title>Complete sequence of Acidovorax avenae subsp. citrulli AAC00-1.</title>
        <authorList>
            <person name="Copeland A."/>
            <person name="Lucas S."/>
            <person name="Lapidus A."/>
            <person name="Barry K."/>
            <person name="Detter J.C."/>
            <person name="Glavina del Rio T."/>
            <person name="Dalin E."/>
            <person name="Tice H."/>
            <person name="Pitluck S."/>
            <person name="Kiss H."/>
            <person name="Brettin T."/>
            <person name="Bruce D."/>
            <person name="Han C."/>
            <person name="Tapia R."/>
            <person name="Gilna P."/>
            <person name="Schmutz J."/>
            <person name="Larimer F."/>
            <person name="Land M."/>
            <person name="Hauser L."/>
            <person name="Kyrpides N."/>
            <person name="Kim E."/>
            <person name="Stahl D."/>
            <person name="Richardson P."/>
        </authorList>
    </citation>
    <scope>NUCLEOTIDE SEQUENCE [LARGE SCALE GENOMIC DNA]</scope>
    <source>
        <strain>AAC00-1</strain>
    </source>
</reference>
<feature type="chain" id="PRO_0000303243" description="tRNA N6-adenosine threonylcarbamoyltransferase">
    <location>
        <begin position="1"/>
        <end position="348"/>
    </location>
</feature>
<feature type="binding site" evidence="1">
    <location>
        <position position="120"/>
    </location>
    <ligand>
        <name>Fe cation</name>
        <dbReference type="ChEBI" id="CHEBI:24875"/>
    </ligand>
</feature>
<feature type="binding site" evidence="1">
    <location>
        <position position="124"/>
    </location>
    <ligand>
        <name>Fe cation</name>
        <dbReference type="ChEBI" id="CHEBI:24875"/>
    </ligand>
</feature>
<feature type="binding site" evidence="1">
    <location>
        <begin position="143"/>
        <end position="147"/>
    </location>
    <ligand>
        <name>substrate</name>
    </ligand>
</feature>
<feature type="binding site" evidence="1">
    <location>
        <position position="176"/>
    </location>
    <ligand>
        <name>substrate</name>
    </ligand>
</feature>
<feature type="binding site" evidence="1">
    <location>
        <position position="189"/>
    </location>
    <ligand>
        <name>substrate</name>
    </ligand>
</feature>
<feature type="binding site" evidence="1">
    <location>
        <position position="282"/>
    </location>
    <ligand>
        <name>substrate</name>
    </ligand>
</feature>
<feature type="binding site" evidence="1">
    <location>
        <position position="310"/>
    </location>
    <ligand>
        <name>Fe cation</name>
        <dbReference type="ChEBI" id="CHEBI:24875"/>
    </ligand>
</feature>
<protein>
    <recommendedName>
        <fullName evidence="1">tRNA N6-adenosine threonylcarbamoyltransferase</fullName>
        <ecNumber evidence="1">2.3.1.234</ecNumber>
    </recommendedName>
    <alternativeName>
        <fullName evidence="1">N6-L-threonylcarbamoyladenine synthase</fullName>
        <shortName evidence="1">t(6)A synthase</shortName>
    </alternativeName>
    <alternativeName>
        <fullName evidence="1">t(6)A37 threonylcarbamoyladenosine biosynthesis protein TsaD</fullName>
    </alternativeName>
    <alternativeName>
        <fullName evidence="1">tRNA threonylcarbamoyladenosine biosynthesis protein TsaD</fullName>
    </alternativeName>
</protein>
<evidence type="ECO:0000255" key="1">
    <source>
        <dbReference type="HAMAP-Rule" id="MF_01445"/>
    </source>
</evidence>
<proteinExistence type="inferred from homology"/>
<organism>
    <name type="scientific">Paracidovorax citrulli (strain AAC00-1)</name>
    <name type="common">Acidovorax citrulli</name>
    <dbReference type="NCBI Taxonomy" id="397945"/>
    <lineage>
        <taxon>Bacteria</taxon>
        <taxon>Pseudomonadati</taxon>
        <taxon>Pseudomonadota</taxon>
        <taxon>Betaproteobacteria</taxon>
        <taxon>Burkholderiales</taxon>
        <taxon>Comamonadaceae</taxon>
        <taxon>Paracidovorax</taxon>
    </lineage>
</organism>
<name>TSAD_PARC0</name>
<dbReference type="EC" id="2.3.1.234" evidence="1"/>
<dbReference type="EMBL" id="CP000512">
    <property type="protein sequence ID" value="ABM32729.1"/>
    <property type="molecule type" value="Genomic_DNA"/>
</dbReference>
<dbReference type="RefSeq" id="WP_011795265.1">
    <property type="nucleotide sequence ID" value="NC_008752.1"/>
</dbReference>
<dbReference type="SMR" id="A1TP41"/>
<dbReference type="STRING" id="397945.Aave_2151"/>
<dbReference type="KEGG" id="aav:Aave_2151"/>
<dbReference type="eggNOG" id="COG0533">
    <property type="taxonomic scope" value="Bacteria"/>
</dbReference>
<dbReference type="HOGENOM" id="CLU_023208_0_0_4"/>
<dbReference type="OrthoDB" id="9806197at2"/>
<dbReference type="Proteomes" id="UP000002596">
    <property type="component" value="Chromosome"/>
</dbReference>
<dbReference type="GO" id="GO:0005737">
    <property type="term" value="C:cytoplasm"/>
    <property type="evidence" value="ECO:0007669"/>
    <property type="project" value="UniProtKB-SubCell"/>
</dbReference>
<dbReference type="GO" id="GO:0005506">
    <property type="term" value="F:iron ion binding"/>
    <property type="evidence" value="ECO:0007669"/>
    <property type="project" value="UniProtKB-UniRule"/>
</dbReference>
<dbReference type="GO" id="GO:0061711">
    <property type="term" value="F:N(6)-L-threonylcarbamoyladenine synthase activity"/>
    <property type="evidence" value="ECO:0007669"/>
    <property type="project" value="UniProtKB-EC"/>
</dbReference>
<dbReference type="GO" id="GO:0002949">
    <property type="term" value="P:tRNA threonylcarbamoyladenosine modification"/>
    <property type="evidence" value="ECO:0007669"/>
    <property type="project" value="UniProtKB-UniRule"/>
</dbReference>
<dbReference type="CDD" id="cd24133">
    <property type="entry name" value="ASKHA_NBD_TsaD_bac"/>
    <property type="match status" value="1"/>
</dbReference>
<dbReference type="FunFam" id="3.30.420.40:FF:000012">
    <property type="entry name" value="tRNA N6-adenosine threonylcarbamoyltransferase"/>
    <property type="match status" value="1"/>
</dbReference>
<dbReference type="FunFam" id="3.30.420.40:FF:000040">
    <property type="entry name" value="tRNA N6-adenosine threonylcarbamoyltransferase"/>
    <property type="match status" value="1"/>
</dbReference>
<dbReference type="Gene3D" id="3.30.420.40">
    <property type="match status" value="2"/>
</dbReference>
<dbReference type="HAMAP" id="MF_01445">
    <property type="entry name" value="TsaD"/>
    <property type="match status" value="1"/>
</dbReference>
<dbReference type="InterPro" id="IPR043129">
    <property type="entry name" value="ATPase_NBD"/>
</dbReference>
<dbReference type="InterPro" id="IPR000905">
    <property type="entry name" value="Gcp-like_dom"/>
</dbReference>
<dbReference type="InterPro" id="IPR017861">
    <property type="entry name" value="KAE1/TsaD"/>
</dbReference>
<dbReference type="InterPro" id="IPR017860">
    <property type="entry name" value="Peptidase_M22_CS"/>
</dbReference>
<dbReference type="InterPro" id="IPR022450">
    <property type="entry name" value="TsaD"/>
</dbReference>
<dbReference type="NCBIfam" id="TIGR00329">
    <property type="entry name" value="gcp_kae1"/>
    <property type="match status" value="1"/>
</dbReference>
<dbReference type="NCBIfam" id="TIGR03723">
    <property type="entry name" value="T6A_TsaD_YgjD"/>
    <property type="match status" value="1"/>
</dbReference>
<dbReference type="PANTHER" id="PTHR11735">
    <property type="entry name" value="TRNA N6-ADENOSINE THREONYLCARBAMOYLTRANSFERASE"/>
    <property type="match status" value="1"/>
</dbReference>
<dbReference type="PANTHER" id="PTHR11735:SF6">
    <property type="entry name" value="TRNA N6-ADENOSINE THREONYLCARBAMOYLTRANSFERASE, MITOCHONDRIAL"/>
    <property type="match status" value="1"/>
</dbReference>
<dbReference type="Pfam" id="PF00814">
    <property type="entry name" value="TsaD"/>
    <property type="match status" value="1"/>
</dbReference>
<dbReference type="PRINTS" id="PR00789">
    <property type="entry name" value="OSIALOPTASE"/>
</dbReference>
<dbReference type="SUPFAM" id="SSF53067">
    <property type="entry name" value="Actin-like ATPase domain"/>
    <property type="match status" value="2"/>
</dbReference>
<dbReference type="PROSITE" id="PS01016">
    <property type="entry name" value="GLYCOPROTEASE"/>
    <property type="match status" value="1"/>
</dbReference>
<accession>A1TP41</accession>
<sequence length="348" mass="36320">MVKSQLILGIESSCDETGVALVRAPADGSVPTLLAHALHSQIDMHQAYGGVVPELASRDHIRRVLPLTGTVLAEADCRLAEVDVVAYTRGPGLAGALLVGAGVACALGASLDRPVLGVHHLEGHLLSPFLSADPPEFPFVALLVSGGHTQLMRVDGVGRYELLGETIDDAAGEAFDKSAKLLGLGYPGGPALSRLAEQGDAAAFKLPRPLLHSGNLDFSFAGLKTAVLTQAKKLGDELPARKADLAASTQAAIVDVLVKKTLAALQASGLRRVVVAGGVGANRLLRAQLDAACARMGVRVHYPELHLCTDNGAMIAMAAAMRLQAGREAPNREYAFDVKPRWPLDALA</sequence>
<comment type="function">
    <text evidence="1">Required for the formation of a threonylcarbamoyl group on adenosine at position 37 (t(6)A37) in tRNAs that read codons beginning with adenine. Is involved in the transfer of the threonylcarbamoyl moiety of threonylcarbamoyl-AMP (TC-AMP) to the N6 group of A37, together with TsaE and TsaB. TsaD likely plays a direct catalytic role in this reaction.</text>
</comment>
<comment type="catalytic activity">
    <reaction evidence="1">
        <text>L-threonylcarbamoyladenylate + adenosine(37) in tRNA = N(6)-L-threonylcarbamoyladenosine(37) in tRNA + AMP + H(+)</text>
        <dbReference type="Rhea" id="RHEA:37059"/>
        <dbReference type="Rhea" id="RHEA-COMP:10162"/>
        <dbReference type="Rhea" id="RHEA-COMP:10163"/>
        <dbReference type="ChEBI" id="CHEBI:15378"/>
        <dbReference type="ChEBI" id="CHEBI:73682"/>
        <dbReference type="ChEBI" id="CHEBI:74411"/>
        <dbReference type="ChEBI" id="CHEBI:74418"/>
        <dbReference type="ChEBI" id="CHEBI:456215"/>
        <dbReference type="EC" id="2.3.1.234"/>
    </reaction>
</comment>
<comment type="cofactor">
    <cofactor evidence="1">
        <name>Fe(2+)</name>
        <dbReference type="ChEBI" id="CHEBI:29033"/>
    </cofactor>
    <text evidence="1">Binds 1 Fe(2+) ion per subunit.</text>
</comment>
<comment type="subcellular location">
    <subcellularLocation>
        <location evidence="1">Cytoplasm</location>
    </subcellularLocation>
</comment>
<comment type="similarity">
    <text evidence="1">Belongs to the KAE1 / TsaD family.</text>
</comment>
<gene>
    <name evidence="1" type="primary">tsaD</name>
    <name type="synonym">gcp</name>
    <name type="ordered locus">Aave_2151</name>
</gene>